<name>RIMO_AZOSB</name>
<proteinExistence type="inferred from homology"/>
<evidence type="ECO:0000255" key="1">
    <source>
        <dbReference type="HAMAP-Rule" id="MF_01865"/>
    </source>
</evidence>
<evidence type="ECO:0000255" key="2">
    <source>
        <dbReference type="PROSITE-ProRule" id="PRU01266"/>
    </source>
</evidence>
<gene>
    <name evidence="1" type="primary">rimO</name>
    <name type="ordered locus">azo1025</name>
</gene>
<comment type="function">
    <text evidence="1">Catalyzes the methylthiolation of an aspartic acid residue of ribosomal protein uS12.</text>
</comment>
<comment type="catalytic activity">
    <reaction evidence="1">
        <text>L-aspartate(89)-[ribosomal protein uS12]-hydrogen + (sulfur carrier)-SH + AH2 + 2 S-adenosyl-L-methionine = 3-methylsulfanyl-L-aspartate(89)-[ribosomal protein uS12]-hydrogen + (sulfur carrier)-H + 5'-deoxyadenosine + L-methionine + A + S-adenosyl-L-homocysteine + 2 H(+)</text>
        <dbReference type="Rhea" id="RHEA:37087"/>
        <dbReference type="Rhea" id="RHEA-COMP:10460"/>
        <dbReference type="Rhea" id="RHEA-COMP:10461"/>
        <dbReference type="Rhea" id="RHEA-COMP:14737"/>
        <dbReference type="Rhea" id="RHEA-COMP:14739"/>
        <dbReference type="ChEBI" id="CHEBI:13193"/>
        <dbReference type="ChEBI" id="CHEBI:15378"/>
        <dbReference type="ChEBI" id="CHEBI:17319"/>
        <dbReference type="ChEBI" id="CHEBI:17499"/>
        <dbReference type="ChEBI" id="CHEBI:29917"/>
        <dbReference type="ChEBI" id="CHEBI:29961"/>
        <dbReference type="ChEBI" id="CHEBI:57844"/>
        <dbReference type="ChEBI" id="CHEBI:57856"/>
        <dbReference type="ChEBI" id="CHEBI:59789"/>
        <dbReference type="ChEBI" id="CHEBI:64428"/>
        <dbReference type="ChEBI" id="CHEBI:73599"/>
        <dbReference type="EC" id="2.8.4.4"/>
    </reaction>
</comment>
<comment type="cofactor">
    <cofactor evidence="1">
        <name>[4Fe-4S] cluster</name>
        <dbReference type="ChEBI" id="CHEBI:49883"/>
    </cofactor>
    <text evidence="1">Binds 2 [4Fe-4S] clusters. One cluster is coordinated with 3 cysteines and an exchangeable S-adenosyl-L-methionine.</text>
</comment>
<comment type="subcellular location">
    <subcellularLocation>
        <location evidence="1">Cytoplasm</location>
    </subcellularLocation>
</comment>
<comment type="similarity">
    <text evidence="1">Belongs to the methylthiotransferase family. RimO subfamily.</text>
</comment>
<feature type="chain" id="PRO_0000374702" description="Ribosomal protein uS12 methylthiotransferase RimO">
    <location>
        <begin position="1"/>
        <end position="443"/>
    </location>
</feature>
<feature type="domain" description="MTTase N-terminal" evidence="1">
    <location>
        <begin position="10"/>
        <end position="120"/>
    </location>
</feature>
<feature type="domain" description="Radical SAM core" evidence="2">
    <location>
        <begin position="137"/>
        <end position="375"/>
    </location>
</feature>
<feature type="domain" description="TRAM" evidence="1">
    <location>
        <begin position="377"/>
        <end position="443"/>
    </location>
</feature>
<feature type="binding site" evidence="1">
    <location>
        <position position="19"/>
    </location>
    <ligand>
        <name>[4Fe-4S] cluster</name>
        <dbReference type="ChEBI" id="CHEBI:49883"/>
        <label>1</label>
    </ligand>
</feature>
<feature type="binding site" evidence="1">
    <location>
        <position position="55"/>
    </location>
    <ligand>
        <name>[4Fe-4S] cluster</name>
        <dbReference type="ChEBI" id="CHEBI:49883"/>
        <label>1</label>
    </ligand>
</feature>
<feature type="binding site" evidence="1">
    <location>
        <position position="84"/>
    </location>
    <ligand>
        <name>[4Fe-4S] cluster</name>
        <dbReference type="ChEBI" id="CHEBI:49883"/>
        <label>1</label>
    </ligand>
</feature>
<feature type="binding site" evidence="1">
    <location>
        <position position="151"/>
    </location>
    <ligand>
        <name>[4Fe-4S] cluster</name>
        <dbReference type="ChEBI" id="CHEBI:49883"/>
        <label>2</label>
        <note>4Fe-4S-S-AdoMet</note>
    </ligand>
</feature>
<feature type="binding site" evidence="1">
    <location>
        <position position="155"/>
    </location>
    <ligand>
        <name>[4Fe-4S] cluster</name>
        <dbReference type="ChEBI" id="CHEBI:49883"/>
        <label>2</label>
        <note>4Fe-4S-S-AdoMet</note>
    </ligand>
</feature>
<feature type="binding site" evidence="1">
    <location>
        <position position="158"/>
    </location>
    <ligand>
        <name>[4Fe-4S] cluster</name>
        <dbReference type="ChEBI" id="CHEBI:49883"/>
        <label>2</label>
        <note>4Fe-4S-S-AdoMet</note>
    </ligand>
</feature>
<keyword id="KW-0004">4Fe-4S</keyword>
<keyword id="KW-0963">Cytoplasm</keyword>
<keyword id="KW-0408">Iron</keyword>
<keyword id="KW-0411">Iron-sulfur</keyword>
<keyword id="KW-0479">Metal-binding</keyword>
<keyword id="KW-1185">Reference proteome</keyword>
<keyword id="KW-0949">S-adenosyl-L-methionine</keyword>
<keyword id="KW-0808">Transferase</keyword>
<protein>
    <recommendedName>
        <fullName evidence="1">Ribosomal protein uS12 methylthiotransferase RimO</fullName>
        <shortName evidence="1">uS12 MTTase</shortName>
        <shortName evidence="1">uS12 methylthiotransferase</shortName>
        <ecNumber evidence="1">2.8.4.4</ecNumber>
    </recommendedName>
    <alternativeName>
        <fullName evidence="1">Ribosomal protein uS12 (aspartate-C(3))-methylthiotransferase</fullName>
    </alternativeName>
    <alternativeName>
        <fullName evidence="1">Ribosome maturation factor RimO</fullName>
    </alternativeName>
</protein>
<organism>
    <name type="scientific">Azoarcus sp. (strain BH72)</name>
    <dbReference type="NCBI Taxonomy" id="418699"/>
    <lineage>
        <taxon>Bacteria</taxon>
        <taxon>Pseudomonadati</taxon>
        <taxon>Pseudomonadota</taxon>
        <taxon>Betaproteobacteria</taxon>
        <taxon>Rhodocyclales</taxon>
        <taxon>Zoogloeaceae</taxon>
        <taxon>Azoarcus</taxon>
    </lineage>
</organism>
<reference key="1">
    <citation type="journal article" date="2006" name="Nat. Biotechnol.">
        <title>Complete genome of the mutualistic, N2-fixing grass endophyte Azoarcus sp. strain BH72.</title>
        <authorList>
            <person name="Krause A."/>
            <person name="Ramakumar A."/>
            <person name="Bartels D."/>
            <person name="Battistoni F."/>
            <person name="Bekel T."/>
            <person name="Boch J."/>
            <person name="Boehm M."/>
            <person name="Friedrich F."/>
            <person name="Hurek T."/>
            <person name="Krause L."/>
            <person name="Linke B."/>
            <person name="McHardy A.C."/>
            <person name="Sarkar A."/>
            <person name="Schneiker S."/>
            <person name="Syed A.A."/>
            <person name="Thauer R."/>
            <person name="Vorhoelter F.-J."/>
            <person name="Weidner S."/>
            <person name="Puehler A."/>
            <person name="Reinhold-Hurek B."/>
            <person name="Kaiser O."/>
            <person name="Goesmann A."/>
        </authorList>
    </citation>
    <scope>NUCLEOTIDE SEQUENCE [LARGE SCALE GENOMIC DNA]</scope>
    <source>
        <strain>BH72</strain>
    </source>
</reference>
<sequence length="443" mass="48791">MSNIKTQDVPRVGFVSLGCPKATSDSEHILTRLRAEGYEISGSYDAADLVVVNTCGFIDAAVEESLDAIGEALAENGRVIVTGCLGAKDDVILAAHPQVLAVTGPHATEEVMQAVHRHLPKPHDPFSDLVPPQGIRLTPQHYAYLKISEGCNHRCTFCIIPSMRGDLVSRPIHDVMREAEALADAGVKELLVISQDTSAYGVDVKYRTGFWGGKPVKTRLYDLANALGELGIWIRMHYVYPYPSVDDLIPLMAEGKILPYLDVPFQHASPRILKAMKRPANAENVLERVRKWREICPDLTIRSTFITGFPGETEEDFEQLLQFLEAAQLDRVGAFAYSPVEGAAANDLPDAVPDEVREERRARLMDFQEDISTQRLEAKIGREMTVLVDDVDEEGALARSPGDAPEIDGLVVIPDGEGLAPGDFVRVRITDCDIHDLYAERVV</sequence>
<accession>A1K487</accession>
<dbReference type="EC" id="2.8.4.4" evidence="1"/>
<dbReference type="EMBL" id="AM406670">
    <property type="protein sequence ID" value="CAL93642.1"/>
    <property type="molecule type" value="Genomic_DNA"/>
</dbReference>
<dbReference type="RefSeq" id="WP_011764759.1">
    <property type="nucleotide sequence ID" value="NC_008702.1"/>
</dbReference>
<dbReference type="SMR" id="A1K487"/>
<dbReference type="STRING" id="62928.azo1025"/>
<dbReference type="KEGG" id="azo:azo1025"/>
<dbReference type="eggNOG" id="COG0621">
    <property type="taxonomic scope" value="Bacteria"/>
</dbReference>
<dbReference type="HOGENOM" id="CLU_018697_0_0_4"/>
<dbReference type="Proteomes" id="UP000002588">
    <property type="component" value="Chromosome"/>
</dbReference>
<dbReference type="GO" id="GO:0005829">
    <property type="term" value="C:cytosol"/>
    <property type="evidence" value="ECO:0007669"/>
    <property type="project" value="TreeGrafter"/>
</dbReference>
<dbReference type="GO" id="GO:0051539">
    <property type="term" value="F:4 iron, 4 sulfur cluster binding"/>
    <property type="evidence" value="ECO:0007669"/>
    <property type="project" value="UniProtKB-UniRule"/>
</dbReference>
<dbReference type="GO" id="GO:0035599">
    <property type="term" value="F:aspartic acid methylthiotransferase activity"/>
    <property type="evidence" value="ECO:0007669"/>
    <property type="project" value="TreeGrafter"/>
</dbReference>
<dbReference type="GO" id="GO:0046872">
    <property type="term" value="F:metal ion binding"/>
    <property type="evidence" value="ECO:0007669"/>
    <property type="project" value="UniProtKB-KW"/>
</dbReference>
<dbReference type="GO" id="GO:0103039">
    <property type="term" value="F:protein methylthiotransferase activity"/>
    <property type="evidence" value="ECO:0007669"/>
    <property type="project" value="UniProtKB-EC"/>
</dbReference>
<dbReference type="GO" id="GO:0006400">
    <property type="term" value="P:tRNA modification"/>
    <property type="evidence" value="ECO:0007669"/>
    <property type="project" value="InterPro"/>
</dbReference>
<dbReference type="CDD" id="cd01335">
    <property type="entry name" value="Radical_SAM"/>
    <property type="match status" value="1"/>
</dbReference>
<dbReference type="FunFam" id="3.40.50.12160:FF:000002">
    <property type="entry name" value="Ribosomal protein S12 methylthiotransferase RimO"/>
    <property type="match status" value="1"/>
</dbReference>
<dbReference type="FunFam" id="3.80.30.20:FF:000001">
    <property type="entry name" value="tRNA-2-methylthio-N(6)-dimethylallyladenosine synthase 2"/>
    <property type="match status" value="1"/>
</dbReference>
<dbReference type="Gene3D" id="3.40.50.12160">
    <property type="entry name" value="Methylthiotransferase, N-terminal domain"/>
    <property type="match status" value="1"/>
</dbReference>
<dbReference type="Gene3D" id="2.40.50.140">
    <property type="entry name" value="Nucleic acid-binding proteins"/>
    <property type="match status" value="1"/>
</dbReference>
<dbReference type="Gene3D" id="3.80.30.20">
    <property type="entry name" value="tm_1862 like domain"/>
    <property type="match status" value="1"/>
</dbReference>
<dbReference type="HAMAP" id="MF_01865">
    <property type="entry name" value="MTTase_RimO"/>
    <property type="match status" value="1"/>
</dbReference>
<dbReference type="InterPro" id="IPR006638">
    <property type="entry name" value="Elp3/MiaA/NifB-like_rSAM"/>
</dbReference>
<dbReference type="InterPro" id="IPR005839">
    <property type="entry name" value="Methylthiotransferase"/>
</dbReference>
<dbReference type="InterPro" id="IPR020612">
    <property type="entry name" value="Methylthiotransferase_CS"/>
</dbReference>
<dbReference type="InterPro" id="IPR013848">
    <property type="entry name" value="Methylthiotransferase_N"/>
</dbReference>
<dbReference type="InterPro" id="IPR038135">
    <property type="entry name" value="Methylthiotransferase_N_sf"/>
</dbReference>
<dbReference type="InterPro" id="IPR012340">
    <property type="entry name" value="NA-bd_OB-fold"/>
</dbReference>
<dbReference type="InterPro" id="IPR005840">
    <property type="entry name" value="Ribosomal_uS12_MeSTrfase_RimO"/>
</dbReference>
<dbReference type="InterPro" id="IPR007197">
    <property type="entry name" value="rSAM"/>
</dbReference>
<dbReference type="InterPro" id="IPR023404">
    <property type="entry name" value="rSAM_horseshoe"/>
</dbReference>
<dbReference type="InterPro" id="IPR002792">
    <property type="entry name" value="TRAM_dom"/>
</dbReference>
<dbReference type="NCBIfam" id="TIGR01125">
    <property type="entry name" value="30S ribosomal protein S12 methylthiotransferase RimO"/>
    <property type="match status" value="1"/>
</dbReference>
<dbReference type="NCBIfam" id="TIGR00089">
    <property type="entry name" value="MiaB/RimO family radical SAM methylthiotransferase"/>
    <property type="match status" value="1"/>
</dbReference>
<dbReference type="PANTHER" id="PTHR43837">
    <property type="entry name" value="RIBOSOMAL PROTEIN S12 METHYLTHIOTRANSFERASE RIMO"/>
    <property type="match status" value="1"/>
</dbReference>
<dbReference type="PANTHER" id="PTHR43837:SF1">
    <property type="entry name" value="RIBOSOMAL PROTEIN US12 METHYLTHIOTRANSFERASE RIMO"/>
    <property type="match status" value="1"/>
</dbReference>
<dbReference type="Pfam" id="PF04055">
    <property type="entry name" value="Radical_SAM"/>
    <property type="match status" value="1"/>
</dbReference>
<dbReference type="Pfam" id="PF18693">
    <property type="entry name" value="TRAM_2"/>
    <property type="match status" value="1"/>
</dbReference>
<dbReference type="Pfam" id="PF00919">
    <property type="entry name" value="UPF0004"/>
    <property type="match status" value="1"/>
</dbReference>
<dbReference type="SFLD" id="SFLDG01082">
    <property type="entry name" value="B12-binding_domain_containing"/>
    <property type="match status" value="1"/>
</dbReference>
<dbReference type="SFLD" id="SFLDS00029">
    <property type="entry name" value="Radical_SAM"/>
    <property type="match status" value="1"/>
</dbReference>
<dbReference type="SFLD" id="SFLDF00274">
    <property type="entry name" value="ribosomal_protein_S12_methylth"/>
    <property type="match status" value="1"/>
</dbReference>
<dbReference type="SMART" id="SM00729">
    <property type="entry name" value="Elp3"/>
    <property type="match status" value="1"/>
</dbReference>
<dbReference type="SUPFAM" id="SSF102114">
    <property type="entry name" value="Radical SAM enzymes"/>
    <property type="match status" value="1"/>
</dbReference>
<dbReference type="PROSITE" id="PS51449">
    <property type="entry name" value="MTTASE_N"/>
    <property type="match status" value="1"/>
</dbReference>
<dbReference type="PROSITE" id="PS01278">
    <property type="entry name" value="MTTASE_RADICAL"/>
    <property type="match status" value="1"/>
</dbReference>
<dbReference type="PROSITE" id="PS51918">
    <property type="entry name" value="RADICAL_SAM"/>
    <property type="match status" value="1"/>
</dbReference>
<dbReference type="PROSITE" id="PS50926">
    <property type="entry name" value="TRAM"/>
    <property type="match status" value="1"/>
</dbReference>